<name>RECR_RHORT</name>
<proteinExistence type="inferred from homology"/>
<evidence type="ECO:0000255" key="1">
    <source>
        <dbReference type="HAMAP-Rule" id="MF_00017"/>
    </source>
</evidence>
<reference key="1">
    <citation type="journal article" date="2011" name="Stand. Genomic Sci.">
        <title>Complete genome sequence of Rhodospirillum rubrum type strain (S1).</title>
        <authorList>
            <person name="Munk A.C."/>
            <person name="Copeland A."/>
            <person name="Lucas S."/>
            <person name="Lapidus A."/>
            <person name="Del Rio T.G."/>
            <person name="Barry K."/>
            <person name="Detter J.C."/>
            <person name="Hammon N."/>
            <person name="Israni S."/>
            <person name="Pitluck S."/>
            <person name="Brettin T."/>
            <person name="Bruce D."/>
            <person name="Han C."/>
            <person name="Tapia R."/>
            <person name="Gilna P."/>
            <person name="Schmutz J."/>
            <person name="Larimer F."/>
            <person name="Land M."/>
            <person name="Kyrpides N.C."/>
            <person name="Mavromatis K."/>
            <person name="Richardson P."/>
            <person name="Rohde M."/>
            <person name="Goeker M."/>
            <person name="Klenk H.P."/>
            <person name="Zhang Y."/>
            <person name="Roberts G.P."/>
            <person name="Reslewic S."/>
            <person name="Schwartz D.C."/>
        </authorList>
    </citation>
    <scope>NUCLEOTIDE SEQUENCE [LARGE SCALE GENOMIC DNA]</scope>
    <source>
        <strain>ATCC 11170 / ATH 1.1.1 / DSM 467 / LMG 4362 / NCIMB 8255 / S1</strain>
    </source>
</reference>
<organism>
    <name type="scientific">Rhodospirillum rubrum (strain ATCC 11170 / ATH 1.1.1 / DSM 467 / LMG 4362 / NCIMB 8255 / S1)</name>
    <dbReference type="NCBI Taxonomy" id="269796"/>
    <lineage>
        <taxon>Bacteria</taxon>
        <taxon>Pseudomonadati</taxon>
        <taxon>Pseudomonadota</taxon>
        <taxon>Alphaproteobacteria</taxon>
        <taxon>Rhodospirillales</taxon>
        <taxon>Rhodospirillaceae</taxon>
        <taxon>Rhodospirillum</taxon>
    </lineage>
</organism>
<keyword id="KW-0227">DNA damage</keyword>
<keyword id="KW-0233">DNA recombination</keyword>
<keyword id="KW-0234">DNA repair</keyword>
<keyword id="KW-0479">Metal-binding</keyword>
<keyword id="KW-1185">Reference proteome</keyword>
<keyword id="KW-0862">Zinc</keyword>
<keyword id="KW-0863">Zinc-finger</keyword>
<comment type="function">
    <text evidence="1">May play a role in DNA repair. It seems to be involved in an RecBC-independent recombinational process of DNA repair. It may act with RecF and RecO.</text>
</comment>
<comment type="similarity">
    <text evidence="1">Belongs to the RecR family.</text>
</comment>
<gene>
    <name evidence="1" type="primary">recR</name>
    <name type="ordered locus">Rru_A3471</name>
</gene>
<protein>
    <recommendedName>
        <fullName evidence="1">Recombination protein RecR</fullName>
    </recommendedName>
</protein>
<sequence>MSAGEIDRLIGLLARLPGLGPRSARRAALHLLKRRESLMDPLMEALGAVAASVRLCPVCGTLDTRAPCSICADPRRDGTLICVVRDVADLWALERGGVFSGRYHVLGGLLSAIDGVGPEDLGLDRLAARVAEGPVVEVILALPATVEGQTTAHVIADLIEPKGITVSGLAQGVPVGGELDYLDDGTLTAALRARRPV</sequence>
<accession>Q2RNN0</accession>
<dbReference type="EMBL" id="CP000230">
    <property type="protein sequence ID" value="ABC24265.1"/>
    <property type="molecule type" value="Genomic_DNA"/>
</dbReference>
<dbReference type="RefSeq" id="WP_011391218.1">
    <property type="nucleotide sequence ID" value="NC_007643.1"/>
</dbReference>
<dbReference type="RefSeq" id="YP_428552.1">
    <property type="nucleotide sequence ID" value="NC_007643.1"/>
</dbReference>
<dbReference type="SMR" id="Q2RNN0"/>
<dbReference type="STRING" id="269796.Rru_A3471"/>
<dbReference type="EnsemblBacteria" id="ABC24265">
    <property type="protein sequence ID" value="ABC24265"/>
    <property type="gene ID" value="Rru_A3471"/>
</dbReference>
<dbReference type="KEGG" id="rru:Rru_A3471"/>
<dbReference type="PATRIC" id="fig|269796.9.peg.3587"/>
<dbReference type="eggNOG" id="COG0353">
    <property type="taxonomic scope" value="Bacteria"/>
</dbReference>
<dbReference type="HOGENOM" id="CLU_060739_1_1_5"/>
<dbReference type="PhylomeDB" id="Q2RNN0"/>
<dbReference type="Proteomes" id="UP000001929">
    <property type="component" value="Chromosome"/>
</dbReference>
<dbReference type="GO" id="GO:0003677">
    <property type="term" value="F:DNA binding"/>
    <property type="evidence" value="ECO:0007669"/>
    <property type="project" value="UniProtKB-UniRule"/>
</dbReference>
<dbReference type="GO" id="GO:0008270">
    <property type="term" value="F:zinc ion binding"/>
    <property type="evidence" value="ECO:0007669"/>
    <property type="project" value="UniProtKB-KW"/>
</dbReference>
<dbReference type="GO" id="GO:0006310">
    <property type="term" value="P:DNA recombination"/>
    <property type="evidence" value="ECO:0007669"/>
    <property type="project" value="UniProtKB-UniRule"/>
</dbReference>
<dbReference type="GO" id="GO:0006281">
    <property type="term" value="P:DNA repair"/>
    <property type="evidence" value="ECO:0007669"/>
    <property type="project" value="UniProtKB-UniRule"/>
</dbReference>
<dbReference type="CDD" id="cd01025">
    <property type="entry name" value="TOPRIM_recR"/>
    <property type="match status" value="1"/>
</dbReference>
<dbReference type="Gene3D" id="3.40.1360.10">
    <property type="match status" value="1"/>
</dbReference>
<dbReference type="Gene3D" id="6.10.250.240">
    <property type="match status" value="1"/>
</dbReference>
<dbReference type="Gene3D" id="1.10.8.420">
    <property type="entry name" value="RecR Domain 1"/>
    <property type="match status" value="1"/>
</dbReference>
<dbReference type="HAMAP" id="MF_00017">
    <property type="entry name" value="RecR"/>
    <property type="match status" value="1"/>
</dbReference>
<dbReference type="InterPro" id="IPR000093">
    <property type="entry name" value="DNA_Rcmb_RecR"/>
</dbReference>
<dbReference type="InterPro" id="IPR023627">
    <property type="entry name" value="Rcmb_RecR"/>
</dbReference>
<dbReference type="InterPro" id="IPR015967">
    <property type="entry name" value="Rcmb_RecR_Znf"/>
</dbReference>
<dbReference type="InterPro" id="IPR006171">
    <property type="entry name" value="TOPRIM_dom"/>
</dbReference>
<dbReference type="InterPro" id="IPR034137">
    <property type="entry name" value="TOPRIM_RecR"/>
</dbReference>
<dbReference type="NCBIfam" id="TIGR00615">
    <property type="entry name" value="recR"/>
    <property type="match status" value="1"/>
</dbReference>
<dbReference type="PANTHER" id="PTHR30446">
    <property type="entry name" value="RECOMBINATION PROTEIN RECR"/>
    <property type="match status" value="1"/>
</dbReference>
<dbReference type="PANTHER" id="PTHR30446:SF0">
    <property type="entry name" value="RECOMBINATION PROTEIN RECR"/>
    <property type="match status" value="1"/>
</dbReference>
<dbReference type="Pfam" id="PF21175">
    <property type="entry name" value="RecR_C"/>
    <property type="match status" value="1"/>
</dbReference>
<dbReference type="Pfam" id="PF21176">
    <property type="entry name" value="RecR_HhH"/>
    <property type="match status" value="1"/>
</dbReference>
<dbReference type="Pfam" id="PF02132">
    <property type="entry name" value="RecR_ZnF"/>
    <property type="match status" value="1"/>
</dbReference>
<dbReference type="Pfam" id="PF13662">
    <property type="entry name" value="Toprim_4"/>
    <property type="match status" value="1"/>
</dbReference>
<dbReference type="SUPFAM" id="SSF111304">
    <property type="entry name" value="Recombination protein RecR"/>
    <property type="match status" value="1"/>
</dbReference>
<dbReference type="PROSITE" id="PS01300">
    <property type="entry name" value="RECR"/>
    <property type="match status" value="1"/>
</dbReference>
<dbReference type="PROSITE" id="PS50880">
    <property type="entry name" value="TOPRIM"/>
    <property type="match status" value="1"/>
</dbReference>
<feature type="chain" id="PRO_0000322943" description="Recombination protein RecR">
    <location>
        <begin position="1"/>
        <end position="197"/>
    </location>
</feature>
<feature type="domain" description="Toprim" evidence="1">
    <location>
        <begin position="79"/>
        <end position="174"/>
    </location>
</feature>
<feature type="zinc finger region" description="C4-type" evidence="1">
    <location>
        <begin position="56"/>
        <end position="71"/>
    </location>
</feature>